<accession>Q00844</accession>
<organism>
    <name type="scientific">Rice stripe virus (isolate T)</name>
    <name type="common">RSV</name>
    <dbReference type="NCBI Taxonomy" id="36394"/>
    <lineage>
        <taxon>Viruses</taxon>
        <taxon>Riboviria</taxon>
        <taxon>Orthornavirae</taxon>
        <taxon>Negarnaviricota</taxon>
        <taxon>Polyploviricotina</taxon>
        <taxon>Ellioviricetes</taxon>
        <taxon>Bunyavirales</taxon>
        <taxon>Phenuiviridae</taxon>
        <taxon>Tenuivirus</taxon>
        <taxon>Tenuivirus oryzaclavatae</taxon>
    </lineage>
</organism>
<dbReference type="EMBL" id="D10979">
    <property type="protein sequence ID" value="BAA01753.1"/>
    <property type="molecule type" value="Genomic_RNA"/>
</dbReference>
<dbReference type="PIR" id="JQ1547">
    <property type="entry name" value="JQ1547"/>
</dbReference>
<dbReference type="PDB" id="7XCD">
    <property type="method" value="X-ray"/>
    <property type="resolution" value="1.71 A"/>
    <property type="chains" value="A=1-178"/>
</dbReference>
<dbReference type="PDBsum" id="7XCD"/>
<dbReference type="SMR" id="Q00844"/>
<dbReference type="KEGG" id="vg:962681"/>
<dbReference type="Proteomes" id="UP000006677">
    <property type="component" value="Genome"/>
</dbReference>
<dbReference type="GO" id="GO:0030430">
    <property type="term" value="C:host cell cytoplasm"/>
    <property type="evidence" value="ECO:0007669"/>
    <property type="project" value="UniProtKB-SubCell"/>
</dbReference>
<dbReference type="InterPro" id="IPR006960">
    <property type="entry name" value="Major_non-capsid_tenuivirus"/>
</dbReference>
<dbReference type="Pfam" id="PF04876">
    <property type="entry name" value="Tenui_NCP"/>
    <property type="match status" value="1"/>
</dbReference>
<reference key="1">
    <citation type="journal article" date="1992" name="J. Gen. Virol.">
        <title>Complete nucleotide sequence of RNA 4 of rice stripe virus isolate T, and comparison with another isolate and with maize stripe virus.</title>
        <authorList>
            <person name="Zhu Y.F."/>
            <person name="Hayakawa T."/>
            <person name="Toriyama S."/>
        </authorList>
    </citation>
    <scope>NUCLEOTIDE SEQUENCE [GENOMIC RNA]</scope>
</reference>
<reference key="2">
    <citation type="journal article" date="1993" name="Virology">
        <title>Comparative light and electron microscopic analyses of tenuivirus major noncapsid protein (NCP) inclusion bodies in infected plants, and of the NCP in vitro.</title>
        <authorList>
            <person name="Espinoza A.M."/>
            <person name="Pereira R."/>
            <person name="Macaya-Lizano A.V."/>
            <person name="Hernandez M."/>
            <person name="Goulden M."/>
            <person name="Rivera C."/>
        </authorList>
    </citation>
    <scope>FUNCTION</scope>
</reference>
<reference key="3">
    <citation type="journal article" date="2005" name="Virus Genes">
        <title>Detection and localization of Rice stripe virus gene products in vivo.</title>
        <authorList>
            <person name="Liang D."/>
            <person name="Qu Z."/>
            <person name="Ma X."/>
            <person name="Hull R."/>
        </authorList>
    </citation>
    <scope>SUBCELLULAR LOCATION</scope>
</reference>
<evidence type="ECO:0000269" key="1">
    <source>
    </source>
</evidence>
<evidence type="ECO:0000269" key="2">
    <source>
    </source>
</evidence>
<evidence type="ECO:0000305" key="3"/>
<evidence type="ECO:0007829" key="4">
    <source>
        <dbReference type="PDB" id="7XCD"/>
    </source>
</evidence>
<protein>
    <recommendedName>
        <fullName>Major non-capsid protein</fullName>
        <shortName>NCP</shortName>
    </recommendedName>
    <alternativeName>
        <fullName>20.5 kDa protein</fullName>
    </alternativeName>
    <alternativeName>
        <fullName>Protein p4</fullName>
    </alternativeName>
    <alternativeName>
        <fullName>Stripe disease-specific protein</fullName>
        <shortName>Protein S</shortName>
    </alternativeName>
</protein>
<gene>
    <name type="ORF">p4</name>
</gene>
<sequence>MQDVQRTIEVSVGPIVGLDYTLLYDTLPETVSDNITLPDLKDPERVTEDTKKLILKGCVYIAYHHPLETDTLFIKVHKHIPEFCHSFLSHLLGGEDDDNALIDIGLFFNMLQPSLGGWITKNFLRHPNRMSKDQIKMLLDQIIKMAKAESSDTEEYEKVWKKMPTYFESIIQPLLHKT</sequence>
<name>NCP_RSVT</name>
<comment type="function">
    <text evidence="2">Induces the formation of large intracellular inclusion body, organized in amorphous and crystalline arrays. Presumably the main cause of the stripe disease observed in host.</text>
</comment>
<comment type="subcellular location">
    <subcellularLocation>
        <location evidence="1">Host cytoplasm</location>
    </subcellularLocation>
</comment>
<comment type="similarity">
    <text evidence="3">Belongs to the tenuiviruses NCP family.</text>
</comment>
<organismHost>
    <name type="scientific">Avena sativa</name>
    <name type="common">Oat</name>
    <dbReference type="NCBI Taxonomy" id="4498"/>
</organismHost>
<organismHost>
    <name type="scientific">Digitaria</name>
    <dbReference type="NCBI Taxonomy" id="66017"/>
</organismHost>
<organismHost>
    <name type="scientific">Eragrostis</name>
    <dbReference type="NCBI Taxonomy" id="38413"/>
</organismHost>
<organismHost>
    <name type="scientific">Hordeum vulgare</name>
    <name type="common">Barley</name>
    <dbReference type="NCBI Taxonomy" id="4513"/>
</organismHost>
<organismHost>
    <name type="scientific">Oryza sativa</name>
    <name type="common">Rice</name>
    <dbReference type="NCBI Taxonomy" id="4530"/>
</organismHost>
<organismHost>
    <name type="scientific">Setaria italica</name>
    <name type="common">Foxtail millet</name>
    <name type="synonym">Panicum italicum</name>
    <dbReference type="NCBI Taxonomy" id="4555"/>
</organismHost>
<organismHost>
    <name type="scientific">Setaria viridis</name>
    <name type="common">Green bristlegrass</name>
    <name type="synonym">Setaria italica subsp. viridis</name>
    <dbReference type="NCBI Taxonomy" id="4556"/>
</organismHost>
<organismHost>
    <name type="scientific">Triticum aestivum</name>
    <name type="common">Wheat</name>
    <dbReference type="NCBI Taxonomy" id="4565"/>
</organismHost>
<organismHost>
    <name type="scientific">Zea mays</name>
    <name type="common">Maize</name>
    <dbReference type="NCBI Taxonomy" id="4577"/>
</organismHost>
<feature type="chain" id="PRO_0000222526" description="Major non-capsid protein">
    <location>
        <begin position="1"/>
        <end position="178"/>
    </location>
</feature>
<feature type="helix" evidence="4">
    <location>
        <begin position="8"/>
        <end position="11"/>
    </location>
</feature>
<feature type="helix" evidence="4">
    <location>
        <begin position="20"/>
        <end position="26"/>
    </location>
</feature>
<feature type="helix" evidence="4">
    <location>
        <begin position="29"/>
        <end position="32"/>
    </location>
</feature>
<feature type="helix" evidence="4">
    <location>
        <begin position="37"/>
        <end position="40"/>
    </location>
</feature>
<feature type="helix" evidence="4">
    <location>
        <begin position="43"/>
        <end position="45"/>
    </location>
</feature>
<feature type="helix" evidence="4">
    <location>
        <begin position="48"/>
        <end position="63"/>
    </location>
</feature>
<feature type="helix" evidence="4">
    <location>
        <begin position="71"/>
        <end position="75"/>
    </location>
</feature>
<feature type="helix" evidence="4">
    <location>
        <begin position="77"/>
        <end position="79"/>
    </location>
</feature>
<feature type="helix" evidence="4">
    <location>
        <begin position="80"/>
        <end position="91"/>
    </location>
</feature>
<feature type="helix" evidence="4">
    <location>
        <begin position="104"/>
        <end position="110"/>
    </location>
</feature>
<feature type="helix" evidence="4">
    <location>
        <begin position="112"/>
        <end position="115"/>
    </location>
</feature>
<feature type="turn" evidence="4">
    <location>
        <begin position="116"/>
        <end position="118"/>
    </location>
</feature>
<feature type="helix" evidence="4">
    <location>
        <begin position="121"/>
        <end position="125"/>
    </location>
</feature>
<feature type="helix" evidence="4">
    <location>
        <begin position="127"/>
        <end position="129"/>
    </location>
</feature>
<feature type="helix" evidence="4">
    <location>
        <begin position="132"/>
        <end position="145"/>
    </location>
</feature>
<feature type="helix" evidence="4">
    <location>
        <begin position="153"/>
        <end position="158"/>
    </location>
</feature>
<feature type="helix" evidence="4">
    <location>
        <begin position="160"/>
        <end position="162"/>
    </location>
</feature>
<feature type="helix" evidence="4">
    <location>
        <begin position="163"/>
        <end position="174"/>
    </location>
</feature>
<proteinExistence type="evidence at protein level"/>
<keyword id="KW-0002">3D-structure</keyword>
<keyword id="KW-1035">Host cytoplasm</keyword>
<keyword id="KW-1185">Reference proteome</keyword>